<sequence>MSDVVLELPSDLRHELKEPLGRIYTDTAALLADAGDPIIAVGDMVTYHLIEAGRTPDLALVDERTERSAVDADVAAAIDGFDRTLSVDNPAATLTADLLAALRDGLDSDETTLLDVDGEEDLATLPAVLAAPAGASVVYGQPDEGMVLADCDDTARDRVRSLLERMDGDAERAIALVSN</sequence>
<comment type="function">
    <text evidence="1">Catalyzes the GTP-dependent phosphorylation of the 3'-hydroxyl group of dephosphocoenzyme A to form coenzyme A (CoA).</text>
</comment>
<comment type="catalytic activity">
    <reaction evidence="1">
        <text>3'-dephospho-CoA + GTP = GDP + CoA + H(+)</text>
        <dbReference type="Rhea" id="RHEA:61156"/>
        <dbReference type="ChEBI" id="CHEBI:15378"/>
        <dbReference type="ChEBI" id="CHEBI:37565"/>
        <dbReference type="ChEBI" id="CHEBI:57287"/>
        <dbReference type="ChEBI" id="CHEBI:57328"/>
        <dbReference type="ChEBI" id="CHEBI:58189"/>
        <dbReference type="EC" id="2.7.1.237"/>
    </reaction>
</comment>
<comment type="pathway">
    <text evidence="1">Cofactor biosynthesis; coenzyme A biosynthesis.</text>
</comment>
<comment type="similarity">
    <text evidence="1">Belongs to the GTP-dependent DPCK family.</text>
</comment>
<comment type="sequence caution" evidence="2">
    <conflict type="erroneous initiation">
        <sequence resource="EMBL-CDS" id="AAV47585"/>
    </conflict>
</comment>
<name>DPCKG_HALMA</name>
<protein>
    <recommendedName>
        <fullName evidence="1">GTP-dependent dephospho-CoA kinase</fullName>
        <ecNumber evidence="1">2.7.1.237</ecNumber>
    </recommendedName>
    <alternativeName>
        <fullName evidence="1">Dephospho-coenzyme A kinase</fullName>
        <shortName evidence="1">DPCK</shortName>
    </alternativeName>
</protein>
<gene>
    <name type="ordered locus">rrnAC2831</name>
</gene>
<organism>
    <name type="scientific">Haloarcula marismortui (strain ATCC 43049 / DSM 3752 / JCM 8966 / VKM B-1809)</name>
    <name type="common">Halobacterium marismortui</name>
    <dbReference type="NCBI Taxonomy" id="272569"/>
    <lineage>
        <taxon>Archaea</taxon>
        <taxon>Methanobacteriati</taxon>
        <taxon>Methanobacteriota</taxon>
        <taxon>Stenosarchaea group</taxon>
        <taxon>Halobacteria</taxon>
        <taxon>Halobacteriales</taxon>
        <taxon>Haloarculaceae</taxon>
        <taxon>Haloarcula</taxon>
    </lineage>
</organism>
<feature type="chain" id="PRO_0000380047" description="GTP-dependent dephospho-CoA kinase">
    <location>
        <begin position="1"/>
        <end position="179"/>
    </location>
</feature>
<feature type="binding site" evidence="1">
    <location>
        <position position="43"/>
    </location>
    <ligand>
        <name>GTP</name>
        <dbReference type="ChEBI" id="CHEBI:37565"/>
    </ligand>
</feature>
<feature type="binding site" evidence="1">
    <location>
        <position position="45"/>
    </location>
    <ligand>
        <name>GTP</name>
        <dbReference type="ChEBI" id="CHEBI:37565"/>
    </ligand>
</feature>
<feature type="binding site" evidence="1">
    <location>
        <position position="62"/>
    </location>
    <ligand>
        <name>GTP</name>
        <dbReference type="ChEBI" id="CHEBI:37565"/>
    </ligand>
</feature>
<feature type="binding site" evidence="1">
    <location>
        <position position="120"/>
    </location>
    <ligand>
        <name>GTP</name>
        <dbReference type="ChEBI" id="CHEBI:37565"/>
    </ligand>
</feature>
<feature type="binding site" evidence="1">
    <location>
        <position position="143"/>
    </location>
    <ligand>
        <name>GTP</name>
        <dbReference type="ChEBI" id="CHEBI:37565"/>
    </ligand>
</feature>
<proteinExistence type="inferred from homology"/>
<accession>Q5UYR8</accession>
<reference key="1">
    <citation type="journal article" date="2004" name="Genome Res.">
        <title>Genome sequence of Haloarcula marismortui: a halophilic archaeon from the Dead Sea.</title>
        <authorList>
            <person name="Baliga N.S."/>
            <person name="Bonneau R."/>
            <person name="Facciotti M.T."/>
            <person name="Pan M."/>
            <person name="Glusman G."/>
            <person name="Deutsch E.W."/>
            <person name="Shannon P."/>
            <person name="Chiu Y."/>
            <person name="Weng R.S."/>
            <person name="Gan R.R."/>
            <person name="Hung P."/>
            <person name="Date S.V."/>
            <person name="Marcotte E."/>
            <person name="Hood L."/>
            <person name="Ng W.V."/>
        </authorList>
    </citation>
    <scope>NUCLEOTIDE SEQUENCE [LARGE SCALE GENOMIC DNA]</scope>
    <source>
        <strain>ATCC 43049 / DSM 3752 / JCM 8966 / VKM B-1809</strain>
    </source>
</reference>
<evidence type="ECO:0000255" key="1">
    <source>
        <dbReference type="HAMAP-Rule" id="MF_00590"/>
    </source>
</evidence>
<evidence type="ECO:0000305" key="2"/>
<dbReference type="EC" id="2.7.1.237" evidence="1"/>
<dbReference type="EMBL" id="AY596297">
    <property type="protein sequence ID" value="AAV47585.1"/>
    <property type="status" value="ALT_INIT"/>
    <property type="molecule type" value="Genomic_DNA"/>
</dbReference>
<dbReference type="RefSeq" id="WP_049939062.1">
    <property type="nucleotide sequence ID" value="NC_006396.1"/>
</dbReference>
<dbReference type="SMR" id="Q5UYR8"/>
<dbReference type="STRING" id="272569.rrnAC2831"/>
<dbReference type="PaxDb" id="272569-rrnAC2831"/>
<dbReference type="EnsemblBacteria" id="AAV47585">
    <property type="protein sequence ID" value="AAV47585"/>
    <property type="gene ID" value="rrnAC2831"/>
</dbReference>
<dbReference type="GeneID" id="40153682"/>
<dbReference type="KEGG" id="hma:rrnAC2831"/>
<dbReference type="PATRIC" id="fig|272569.17.peg.3404"/>
<dbReference type="eggNOG" id="arCOG04076">
    <property type="taxonomic scope" value="Archaea"/>
</dbReference>
<dbReference type="HOGENOM" id="CLU_120795_0_0_2"/>
<dbReference type="UniPathway" id="UPA00241"/>
<dbReference type="Proteomes" id="UP000001169">
    <property type="component" value="Chromosome I"/>
</dbReference>
<dbReference type="GO" id="GO:0005525">
    <property type="term" value="F:GTP binding"/>
    <property type="evidence" value="ECO:0007669"/>
    <property type="project" value="UniProtKB-UniRule"/>
</dbReference>
<dbReference type="GO" id="GO:0016301">
    <property type="term" value="F:kinase activity"/>
    <property type="evidence" value="ECO:0007669"/>
    <property type="project" value="UniProtKB-UniRule"/>
</dbReference>
<dbReference type="GO" id="GO:0015937">
    <property type="term" value="P:coenzyme A biosynthetic process"/>
    <property type="evidence" value="ECO:0007669"/>
    <property type="project" value="UniProtKB-UniRule"/>
</dbReference>
<dbReference type="HAMAP" id="MF_00590">
    <property type="entry name" value="Dephospho_CoA_kinase_GTP_dep"/>
    <property type="match status" value="1"/>
</dbReference>
<dbReference type="InterPro" id="IPR007164">
    <property type="entry name" value="GTP-dep_dephospho-CoA_kin"/>
</dbReference>
<dbReference type="PANTHER" id="PTHR40732:SF1">
    <property type="entry name" value="GTP-DEPENDENT DEPHOSPHO-COA KINASE"/>
    <property type="match status" value="1"/>
</dbReference>
<dbReference type="PANTHER" id="PTHR40732">
    <property type="entry name" value="UPF0218 PROTEIN TK1697"/>
    <property type="match status" value="1"/>
</dbReference>
<dbReference type="Pfam" id="PF04019">
    <property type="entry name" value="DUF359"/>
    <property type="match status" value="1"/>
</dbReference>
<dbReference type="PIRSF" id="PIRSF006533">
    <property type="entry name" value="UCP006533"/>
    <property type="match status" value="1"/>
</dbReference>
<keyword id="KW-0173">Coenzyme A biosynthesis</keyword>
<keyword id="KW-0342">GTP-binding</keyword>
<keyword id="KW-0418">Kinase</keyword>
<keyword id="KW-0547">Nucleotide-binding</keyword>
<keyword id="KW-1185">Reference proteome</keyword>
<keyword id="KW-0808">Transferase</keyword>